<organism>
    <name type="scientific">Solanum lycopersicum</name>
    <name type="common">Tomato</name>
    <name type="synonym">Lycopersicon esculentum</name>
    <dbReference type="NCBI Taxonomy" id="4081"/>
    <lineage>
        <taxon>Eukaryota</taxon>
        <taxon>Viridiplantae</taxon>
        <taxon>Streptophyta</taxon>
        <taxon>Embryophyta</taxon>
        <taxon>Tracheophyta</taxon>
        <taxon>Spermatophyta</taxon>
        <taxon>Magnoliopsida</taxon>
        <taxon>eudicotyledons</taxon>
        <taxon>Gunneridae</taxon>
        <taxon>Pentapetalae</taxon>
        <taxon>asterids</taxon>
        <taxon>lamiids</taxon>
        <taxon>Solanales</taxon>
        <taxon>Solanaceae</taxon>
        <taxon>Solanoideae</taxon>
        <taxon>Solaneae</taxon>
        <taxon>Solanum</taxon>
        <taxon>Solanum subgen. Lycopersicon</taxon>
    </lineage>
</organism>
<comment type="subunit">
    <text evidence="2">Homodimer.</text>
</comment>
<comment type="similarity">
    <text evidence="2">Belongs to the 14-3-3 family.</text>
</comment>
<sequence length="261" mass="29479">MASSKERESLVYIARLAEQAERYDEMVDAMKNVANLDVELTVEERNLLSVGYKNVVGSRRASWRILSSIEQKEDARGNEQNVKRIQGYRQKVESELTDICNNIMTVIDEHLIPSCTAGESTVFYYKMKGDYYRYLAEFKTGDDKKEVSDLSLKAYQTATTTAEAELPITHPIRLGLALNFSVFYYEIMNSPERACQLAKQVFDEAISELDSLNEDNYKDGTLILQLLRDNLTLWTSDIPEDGEEAPKGDAANKVGAGEDAE</sequence>
<gene>
    <name type="primary">TFT8</name>
</gene>
<dbReference type="EMBL" id="X98864">
    <property type="protein sequence ID" value="CAA67372.2"/>
    <property type="molecule type" value="mRNA"/>
</dbReference>
<dbReference type="PIR" id="T07390">
    <property type="entry name" value="T07390"/>
</dbReference>
<dbReference type="RefSeq" id="NP_001234267.1">
    <property type="nucleotide sequence ID" value="NM_001247338.2"/>
</dbReference>
<dbReference type="SMR" id="P93213"/>
<dbReference type="FunCoup" id="P93213">
    <property type="interactions" value="1688"/>
</dbReference>
<dbReference type="STRING" id="4081.P93213"/>
<dbReference type="PaxDb" id="4081-Solyc12g010860.1.1"/>
<dbReference type="EnsemblPlants" id="Solyc12g010860.2.1">
    <property type="protein sequence ID" value="Solyc12g010860.2.1"/>
    <property type="gene ID" value="Solyc12g010860.2"/>
</dbReference>
<dbReference type="GeneID" id="544114"/>
<dbReference type="Gramene" id="Solyc12g010860.2.1">
    <property type="protein sequence ID" value="Solyc12g010860.2.1"/>
    <property type="gene ID" value="Solyc12g010860.2"/>
</dbReference>
<dbReference type="KEGG" id="sly:544114"/>
<dbReference type="eggNOG" id="KOG0841">
    <property type="taxonomic scope" value="Eukaryota"/>
</dbReference>
<dbReference type="HOGENOM" id="CLU_058290_0_0_1"/>
<dbReference type="InParanoid" id="P93213"/>
<dbReference type="OMA" id="ICNDIMM"/>
<dbReference type="OrthoDB" id="10260625at2759"/>
<dbReference type="PhylomeDB" id="P93213"/>
<dbReference type="Proteomes" id="UP000004994">
    <property type="component" value="Chromosome 12"/>
</dbReference>
<dbReference type="GO" id="GO:0005737">
    <property type="term" value="C:cytoplasm"/>
    <property type="evidence" value="ECO:0000318"/>
    <property type="project" value="GO_Central"/>
</dbReference>
<dbReference type="GO" id="GO:0008104">
    <property type="term" value="P:protein localization"/>
    <property type="evidence" value="ECO:0000318"/>
    <property type="project" value="GO_Central"/>
</dbReference>
<dbReference type="GO" id="GO:0007165">
    <property type="term" value="P:signal transduction"/>
    <property type="evidence" value="ECO:0000318"/>
    <property type="project" value="GO_Central"/>
</dbReference>
<dbReference type="FunFam" id="1.20.190.20:FF:000002">
    <property type="entry name" value="14-3-3 protein epsilon"/>
    <property type="match status" value="1"/>
</dbReference>
<dbReference type="Gene3D" id="1.20.190.20">
    <property type="entry name" value="14-3-3 domain"/>
    <property type="match status" value="1"/>
</dbReference>
<dbReference type="InterPro" id="IPR000308">
    <property type="entry name" value="14-3-3"/>
</dbReference>
<dbReference type="InterPro" id="IPR023409">
    <property type="entry name" value="14-3-3_CS"/>
</dbReference>
<dbReference type="InterPro" id="IPR036815">
    <property type="entry name" value="14-3-3_dom_sf"/>
</dbReference>
<dbReference type="InterPro" id="IPR023410">
    <property type="entry name" value="14-3-3_domain"/>
</dbReference>
<dbReference type="PANTHER" id="PTHR18860">
    <property type="entry name" value="14-3-3 PROTEIN"/>
    <property type="match status" value="1"/>
</dbReference>
<dbReference type="Pfam" id="PF00244">
    <property type="entry name" value="14-3-3"/>
    <property type="match status" value="1"/>
</dbReference>
<dbReference type="PIRSF" id="PIRSF000868">
    <property type="entry name" value="14-3-3"/>
    <property type="match status" value="1"/>
</dbReference>
<dbReference type="PRINTS" id="PR00305">
    <property type="entry name" value="1433ZETA"/>
</dbReference>
<dbReference type="SMART" id="SM00101">
    <property type="entry name" value="14_3_3"/>
    <property type="match status" value="1"/>
</dbReference>
<dbReference type="SUPFAM" id="SSF48445">
    <property type="entry name" value="14-3-3 protein"/>
    <property type="match status" value="1"/>
</dbReference>
<dbReference type="PROSITE" id="PS00796">
    <property type="entry name" value="1433_1"/>
    <property type="match status" value="1"/>
</dbReference>
<dbReference type="PROSITE" id="PS00797">
    <property type="entry name" value="1433_2"/>
    <property type="match status" value="1"/>
</dbReference>
<reference key="1">
    <citation type="submission" date="2002-08" db="EMBL/GenBank/DDBJ databases">
        <authorList>
            <person name="Roberts M.R."/>
        </authorList>
    </citation>
    <scope>NUCLEOTIDE SEQUENCE [MRNA]</scope>
    <scope>SEQUENCE REVISION TO 20 AND 76</scope>
    <source>
        <strain>cv. Moneymaker</strain>
        <tissue>Leaf</tissue>
    </source>
</reference>
<reference key="2">
    <citation type="journal article" date="1999" name="Plant Physiol.">
        <title>Fusicoccin, 14-3-3 proteins, and defense responses in tomato plants.</title>
        <authorList>
            <person name="Roberts M.R."/>
            <person name="Bowles D.J."/>
        </authorList>
    </citation>
    <scope>NUCLEOTIDE SEQUENCE [MRNA] OF 1-131</scope>
    <source>
        <strain>cv. Moneymaker</strain>
        <tissue>Leaf</tissue>
    </source>
</reference>
<evidence type="ECO:0000256" key="1">
    <source>
        <dbReference type="SAM" id="MobiDB-lite"/>
    </source>
</evidence>
<evidence type="ECO:0000305" key="2"/>
<proteinExistence type="evidence at transcript level"/>
<feature type="chain" id="PRO_0000058688" description="14-3-3 protein 8">
    <location>
        <begin position="1"/>
        <end position="261"/>
    </location>
</feature>
<feature type="region of interest" description="Disordered" evidence="1">
    <location>
        <begin position="237"/>
        <end position="261"/>
    </location>
</feature>
<keyword id="KW-1185">Reference proteome</keyword>
<protein>
    <recommendedName>
        <fullName>14-3-3 protein 8</fullName>
    </recommendedName>
</protein>
<name>14338_SOLLC</name>
<accession>P93213</accession>